<dbReference type="EMBL" id="AY849002">
    <property type="protein sequence ID" value="AAX50223.1"/>
    <property type="molecule type" value="mRNA"/>
</dbReference>
<dbReference type="SMR" id="Q58T58"/>
<dbReference type="GO" id="GO:0005576">
    <property type="term" value="C:extracellular region"/>
    <property type="evidence" value="ECO:0007669"/>
    <property type="project" value="UniProtKB-SubCell"/>
</dbReference>
<dbReference type="GO" id="GO:0042742">
    <property type="term" value="P:defense response to bacterium"/>
    <property type="evidence" value="ECO:0007669"/>
    <property type="project" value="UniProtKB-KW"/>
</dbReference>
<dbReference type="GO" id="GO:0050832">
    <property type="term" value="P:defense response to fungus"/>
    <property type="evidence" value="ECO:0007669"/>
    <property type="project" value="UniProtKB-KW"/>
</dbReference>
<dbReference type="GO" id="GO:0031640">
    <property type="term" value="P:killing of cells of another organism"/>
    <property type="evidence" value="ECO:0007669"/>
    <property type="project" value="UniProtKB-KW"/>
</dbReference>
<dbReference type="InterPro" id="IPR007962">
    <property type="entry name" value="Bombinin"/>
</dbReference>
<dbReference type="Pfam" id="PF05298">
    <property type="entry name" value="Bombinin"/>
    <property type="match status" value="1"/>
</dbReference>
<proteinExistence type="evidence at protein level"/>
<name>M7H13_BOMMX</name>
<protein>
    <recommendedName>
        <fullName>Maximins 7/H13</fullName>
    </recommendedName>
    <component>
        <recommendedName>
            <fullName>Maximin-7</fullName>
        </recommendedName>
    </component>
    <component>
        <recommendedName>
            <fullName>Maximin-H13</fullName>
        </recommendedName>
    </component>
</protein>
<keyword id="KW-0027">Amidation</keyword>
<keyword id="KW-0878">Amphibian defense peptide</keyword>
<keyword id="KW-0044">Antibiotic</keyword>
<keyword id="KW-0929">Antimicrobial</keyword>
<keyword id="KW-0165">Cleavage on pair of basic residues</keyword>
<keyword id="KW-0204">Cytolysis</keyword>
<keyword id="KW-0903">Direct protein sequencing</keyword>
<keyword id="KW-0295">Fungicide</keyword>
<keyword id="KW-0354">Hemolysis</keyword>
<keyword id="KW-0964">Secreted</keyword>
<keyword id="KW-0732">Signal</keyword>
<sequence length="144" mass="15971">MNFKYIVAVSFLIASAYARSEENDEQSLSQRDVLEEESLREIRGIGAKILGGVKTALKGALKELASTYVNGKRTAEDHEVMKRLEAVMRDLDSLDYPEEAAERETRGFNQEEIANLFTKKEKRILGPVIKTIGGVLGGLLKNLG</sequence>
<organism>
    <name type="scientific">Bombina maxima</name>
    <name type="common">Giant fire-bellied toad</name>
    <name type="synonym">Chinese red belly toad</name>
    <dbReference type="NCBI Taxonomy" id="161274"/>
    <lineage>
        <taxon>Eukaryota</taxon>
        <taxon>Metazoa</taxon>
        <taxon>Chordata</taxon>
        <taxon>Craniata</taxon>
        <taxon>Vertebrata</taxon>
        <taxon>Euteleostomi</taxon>
        <taxon>Amphibia</taxon>
        <taxon>Batrachia</taxon>
        <taxon>Anura</taxon>
        <taxon>Bombinatoridae</taxon>
        <taxon>Bombina</taxon>
    </lineage>
</organism>
<feature type="signal peptide" evidence="2">
    <location>
        <begin position="1"/>
        <end position="18"/>
    </location>
</feature>
<feature type="propeptide" id="PRO_0000003208" evidence="1">
    <location>
        <begin position="19"/>
        <end position="43"/>
    </location>
</feature>
<feature type="peptide" id="PRO_0000003209" description="Maximin-7">
    <location>
        <begin position="44"/>
        <end position="70"/>
    </location>
</feature>
<feature type="propeptide" id="PRO_0000003210" evidence="1">
    <location>
        <begin position="74"/>
        <end position="123"/>
    </location>
</feature>
<feature type="peptide" id="PRO_0000003211" description="Maximin-H13">
    <location>
        <begin position="124"/>
        <end position="143"/>
    </location>
</feature>
<feature type="modified residue" description="Asparagine amide" evidence="3">
    <location>
        <position position="70"/>
    </location>
</feature>
<feature type="modified residue" description="Leucine amide" evidence="3">
    <location>
        <position position="143"/>
    </location>
</feature>
<comment type="function">
    <text evidence="1">Maximin-7 shows antimicrobial activity against bacteria and against the fungus C.albicans. It has little hemolytic activity (By similarity).</text>
</comment>
<comment type="function">
    <text evidence="1">Maximin-H13 shows antimicrobial activity against bacteria and against the fungus C.albicans. Shows strong hemolytic activity (By similarity).</text>
</comment>
<comment type="subcellular location">
    <subcellularLocation>
        <location>Secreted</location>
    </subcellularLocation>
</comment>
<comment type="tissue specificity">
    <text>Expressed by the skin glands.</text>
</comment>
<comment type="similarity">
    <text evidence="4">Belongs to the bombinin family.</text>
</comment>
<reference key="1">
    <citation type="journal article" date="2005" name="Eur. J. Immunol.">
        <title>Variety of antimicrobial peptides in the Bombina maxima toad and evidence of their rapid diversification.</title>
        <authorList>
            <person name="Lee W.-H."/>
            <person name="Li Y."/>
            <person name="Lai R."/>
            <person name="Li S."/>
            <person name="Zhang Y."/>
            <person name="Wang W."/>
        </authorList>
    </citation>
    <scope>NUCLEOTIDE SEQUENCE [MRNA]</scope>
    <scope>PROTEIN SEQUENCE OF 44-70 AND 124-143</scope>
    <scope>AMIDATION AT ASN-70 AND LEU-143</scope>
    <source>
        <tissue>Skin</tissue>
    </source>
</reference>
<evidence type="ECO:0000250" key="1"/>
<evidence type="ECO:0000255" key="2"/>
<evidence type="ECO:0000269" key="3">
    <source>
    </source>
</evidence>
<evidence type="ECO:0000305" key="4"/>
<accession>Q58T58</accession>